<keyword id="KW-0158">Chromosome</keyword>
<keyword id="KW-0238">DNA-binding</keyword>
<keyword id="KW-0325">Glycoprotein</keyword>
<keyword id="KW-1017">Isopeptide bond</keyword>
<keyword id="KW-0544">Nucleosome core</keyword>
<keyword id="KW-0539">Nucleus</keyword>
<keyword id="KW-0832">Ubl conjugation</keyword>
<protein>
    <recommendedName>
        <fullName>Histone H2B</fullName>
    </recommendedName>
</protein>
<accession>P48557</accession>
<proteinExistence type="inferred from homology"/>
<evidence type="ECO:0000250" key="1"/>
<evidence type="ECO:0000256" key="2">
    <source>
        <dbReference type="SAM" id="MobiDB-lite"/>
    </source>
</evidence>
<evidence type="ECO:0000305" key="3"/>
<reference key="1">
    <citation type="journal article" date="1995" name="DNA Seq.">
        <title>Structure of histone H2B and H4 genes of the sea cucumber Holothuria tubulosa.</title>
        <authorList>
            <person name="Drabent B."/>
            <person name="Louroutziatis A."/>
            <person name="Prats E."/>
            <person name="Cornudella L."/>
            <person name="Doenecke D."/>
        </authorList>
    </citation>
    <scope>NUCLEOTIDE SEQUENCE [GENOMIC DNA]</scope>
</reference>
<name>H2B_HOLTU</name>
<comment type="function">
    <text>Core component of nucleosome. Nucleosomes wrap and compact DNA into chromatin, limiting DNA accessibility to the cellular machineries which require DNA as a template. Histones thereby play a central role in transcription regulation, DNA repair, DNA replication and chromosomal stability. DNA accessibility is regulated via a complex set of post-translational modifications of histones, also called histone code, and nucleosome remodeling.</text>
</comment>
<comment type="subunit">
    <text>The nucleosome is a histone octamer containing two molecules each of H2A, H2B, H3 and H4 assembled in one H3-H4 heterotetramer and two H2A-H2B heterodimers. The octamer wraps approximately 147 bp of DNA.</text>
</comment>
<comment type="subcellular location">
    <subcellularLocation>
        <location>Nucleus</location>
    </subcellularLocation>
    <subcellularLocation>
        <location>Chromosome</location>
    </subcellularLocation>
</comment>
<comment type="PTM">
    <text evidence="1">Monoubiquitination of Lys-118 gives a specific tag for epigenetic transcriptional activation and is also prerequisite for histone H3 'Lys-4' and 'Lys-79' methylation.</text>
</comment>
<comment type="PTM">
    <text evidence="1">GlcNAcylation at Ser-110 promotes monoubiquitination of Lys-118. It fluctuates in response to extracellular glucose, and associates with transcribed genes (By similarity).</text>
</comment>
<comment type="similarity">
    <text evidence="3">Belongs to the histone H2B family.</text>
</comment>
<organism>
    <name type="scientific">Holothuria tubulosa</name>
    <name type="common">Tubular sea cucumber</name>
    <dbReference type="NCBI Taxonomy" id="7685"/>
    <lineage>
        <taxon>Eukaryota</taxon>
        <taxon>Metazoa</taxon>
        <taxon>Echinodermata</taxon>
        <taxon>Eleutherozoa</taxon>
        <taxon>Echinozoa</taxon>
        <taxon>Holothuroidea</taxon>
        <taxon>Aspidochirotacea</taxon>
        <taxon>Aspidochirotida</taxon>
        <taxon>Holothuriidae</taxon>
        <taxon>Holothuria</taxon>
    </lineage>
</organism>
<dbReference type="EMBL" id="Z46225">
    <property type="protein sequence ID" value="CAA86297.1"/>
    <property type="molecule type" value="Genomic_DNA"/>
</dbReference>
<dbReference type="PIR" id="S49484">
    <property type="entry name" value="S49484"/>
</dbReference>
<dbReference type="SMR" id="P48557"/>
<dbReference type="GO" id="GO:0000786">
    <property type="term" value="C:nucleosome"/>
    <property type="evidence" value="ECO:0007669"/>
    <property type="project" value="UniProtKB-KW"/>
</dbReference>
<dbReference type="GO" id="GO:0005634">
    <property type="term" value="C:nucleus"/>
    <property type="evidence" value="ECO:0007669"/>
    <property type="project" value="UniProtKB-SubCell"/>
</dbReference>
<dbReference type="GO" id="GO:0003677">
    <property type="term" value="F:DNA binding"/>
    <property type="evidence" value="ECO:0007669"/>
    <property type="project" value="UniProtKB-KW"/>
</dbReference>
<dbReference type="GO" id="GO:0046982">
    <property type="term" value="F:protein heterodimerization activity"/>
    <property type="evidence" value="ECO:0007669"/>
    <property type="project" value="InterPro"/>
</dbReference>
<dbReference type="GO" id="GO:0044877">
    <property type="term" value="F:protein-containing complex binding"/>
    <property type="evidence" value="ECO:0000250"/>
    <property type="project" value="UniProtKB"/>
</dbReference>
<dbReference type="GO" id="GO:0030527">
    <property type="term" value="F:structural constituent of chromatin"/>
    <property type="evidence" value="ECO:0007669"/>
    <property type="project" value="InterPro"/>
</dbReference>
<dbReference type="CDD" id="cd22910">
    <property type="entry name" value="HFD_H2B"/>
    <property type="match status" value="1"/>
</dbReference>
<dbReference type="FunFam" id="1.10.20.10:FF:000016">
    <property type="entry name" value="Histone H2B"/>
    <property type="match status" value="1"/>
</dbReference>
<dbReference type="Gene3D" id="1.10.20.10">
    <property type="entry name" value="Histone, subunit A"/>
    <property type="match status" value="1"/>
</dbReference>
<dbReference type="InterPro" id="IPR009072">
    <property type="entry name" value="Histone-fold"/>
</dbReference>
<dbReference type="InterPro" id="IPR007125">
    <property type="entry name" value="Histone_H2A/H2B/H3"/>
</dbReference>
<dbReference type="InterPro" id="IPR000558">
    <property type="entry name" value="Histone_H2B"/>
</dbReference>
<dbReference type="InterPro" id="IPR055333">
    <property type="entry name" value="HISTONE_H2B_site"/>
</dbReference>
<dbReference type="PANTHER" id="PTHR23428">
    <property type="entry name" value="HISTONE H2B"/>
    <property type="match status" value="1"/>
</dbReference>
<dbReference type="Pfam" id="PF00125">
    <property type="entry name" value="Histone"/>
    <property type="match status" value="1"/>
</dbReference>
<dbReference type="PRINTS" id="PR00621">
    <property type="entry name" value="HISTONEH2B"/>
</dbReference>
<dbReference type="SMART" id="SM00427">
    <property type="entry name" value="H2B"/>
    <property type="match status" value="1"/>
</dbReference>
<dbReference type="SUPFAM" id="SSF47113">
    <property type="entry name" value="Histone-fold"/>
    <property type="match status" value="1"/>
</dbReference>
<dbReference type="PROSITE" id="PS00357">
    <property type="entry name" value="HISTONE_H2B"/>
    <property type="match status" value="1"/>
</dbReference>
<sequence>MAPKAPGKGAKKAAKSKAPRAPGDRKRKRTRRESYSIYIYKVMKQVHPDTGISSRAMSIMNSFVNDIFERIAAEASRLAHYNRKSTITSREVQTAVRLLLPGELAKHAVSEGTKAVTKYTTSK</sequence>
<feature type="chain" id="PRO_0000071876" description="Histone H2B">
    <location>
        <begin position="1"/>
        <end position="123"/>
    </location>
</feature>
<feature type="region of interest" description="Disordered" evidence="2">
    <location>
        <begin position="1"/>
        <end position="32"/>
    </location>
</feature>
<feature type="compositionally biased region" description="Basic residues" evidence="2">
    <location>
        <begin position="9"/>
        <end position="18"/>
    </location>
</feature>
<feature type="glycosylation site" description="O-linked (GlcNAc) serine" evidence="1">
    <location>
        <position position="110"/>
    </location>
</feature>
<feature type="cross-link" description="Glycyl lysine isopeptide (Lys-Gly) (interchain with G-Cter in ubiquitin)" evidence="1">
    <location>
        <position position="118"/>
    </location>
</feature>